<proteinExistence type="evidence at protein level"/>
<feature type="chain" id="PRO_0000154938" description="G protein-activated inward rectifier potassium channel 1">
    <location>
        <begin position="1"/>
        <end position="501"/>
    </location>
</feature>
<feature type="topological domain" description="Cytoplasmic" evidence="1">
    <location>
        <begin position="1"/>
        <end position="80"/>
    </location>
</feature>
<feature type="transmembrane region" description="Helical; Name=M1" evidence="1">
    <location>
        <begin position="81"/>
        <end position="105"/>
    </location>
</feature>
<feature type="topological domain" description="Extracellular" evidence="1">
    <location>
        <begin position="106"/>
        <end position="129"/>
    </location>
</feature>
<feature type="intramembrane region" description="Helical; Pore-forming; Name=H5" evidence="1">
    <location>
        <begin position="130"/>
        <end position="141"/>
    </location>
</feature>
<feature type="intramembrane region" description="Pore-forming" evidence="1">
    <location>
        <begin position="142"/>
        <end position="148"/>
    </location>
</feature>
<feature type="topological domain" description="Extracellular" evidence="1">
    <location>
        <begin position="149"/>
        <end position="157"/>
    </location>
</feature>
<feature type="transmembrane region" description="Helical; Name=M2" evidence="1">
    <location>
        <begin position="158"/>
        <end position="179"/>
    </location>
</feature>
<feature type="topological domain" description="Cytoplasmic" evidence="1">
    <location>
        <begin position="180"/>
        <end position="501"/>
    </location>
</feature>
<feature type="region of interest" description="Disordered" evidence="5">
    <location>
        <begin position="1"/>
        <end position="40"/>
    </location>
</feature>
<feature type="region of interest" description="Polyphosphoinositide (PIP2)-binding" evidence="3">
    <location>
        <begin position="182"/>
        <end position="209"/>
    </location>
</feature>
<feature type="short sequence motif" description="Selectivity filter" evidence="1">
    <location>
        <begin position="143"/>
        <end position="148"/>
    </location>
</feature>
<feature type="compositionally biased region" description="Low complexity" evidence="5">
    <location>
        <begin position="18"/>
        <end position="38"/>
    </location>
</feature>
<feature type="site" description="Role in the control of polyamine-mediated channel gating and in the blocking by intracellular magnesium" evidence="1">
    <location>
        <position position="173"/>
    </location>
</feature>
<feature type="modified residue" description="Phosphoserine" evidence="2">
    <location>
        <position position="385"/>
    </location>
</feature>
<feature type="modified residue" description="Phosphoserine" evidence="2">
    <location>
        <position position="424"/>
    </location>
</feature>
<feature type="glycosylation site" description="N-linked (GlcNAc...) asparagine" evidence="7">
    <location>
        <position position="119"/>
    </location>
</feature>
<feature type="splice variant" id="VSP_045432" description="In isoform 2." evidence="10 11">
    <original>S</original>
    <variation>G</variation>
    <location>
        <position position="235"/>
    </location>
</feature>
<feature type="splice variant" id="VSP_045433" description="In isoform 2." evidence="10 11">
    <location>
        <begin position="236"/>
        <end position="501"/>
    </location>
</feature>
<feature type="sequence variant" id="VAR_049669" description="In dbSNP:rs16838016.">
    <original>K</original>
    <variation>R</variation>
    <location>
        <position position="40"/>
    </location>
</feature>
<feature type="sequence conflict" description="In Ref. 6; AAH22495." evidence="12" ref="6">
    <original>C</original>
    <variation>R</variation>
    <location>
        <position position="271"/>
    </location>
</feature>
<feature type="sequence conflict" description="In Ref. 6; AAH22495." evidence="12" ref="6">
    <original>E</original>
    <variation>K</variation>
    <location>
        <position position="291"/>
    </location>
</feature>
<reference key="1">
    <citation type="journal article" date="1996" name="J. Gen. Physiol.">
        <title>A recombinant inwardly rectifying potassium channel coupled to GTP-binding proteins.</title>
        <authorList>
            <person name="Chan K.W."/>
            <person name="Langan M.N."/>
            <person name="Sui J."/>
            <person name="Kozak A."/>
            <person name="Pabon A."/>
            <person name="Ladias J.A.A."/>
            <person name="Logothetis D.E."/>
        </authorList>
    </citation>
    <scope>NUCLEOTIDE SEQUENCE [MRNA] (ISOFORM 1)</scope>
    <scope>FUNCTION</scope>
    <scope>TRANSPORTER ACTIVITY</scope>
    <scope>SUBUNIT</scope>
    <source>
        <tissue>Brain</tissue>
    </source>
</reference>
<reference key="2">
    <citation type="journal article" date="1996" name="Brain Res. Mol. Brain Res.">
        <title>Cloning of a G protein-activated inwardly rectifying potassium channel from human cerebellum.</title>
        <authorList>
            <person name="Schoots O."/>
            <person name="Yue K.T."/>
            <person name="Macdonald J.F."/>
            <person name="Hampson D.R."/>
            <person name="Nobrega J.N."/>
            <person name="Dixon L.M."/>
            <person name="van Tol H.H.M."/>
        </authorList>
    </citation>
    <scope>NUCLEOTIDE SEQUENCE [MRNA] (ISOFORM 1)</scope>
    <scope>FUNCTION</scope>
    <scope>TRANSPORTER ACTIVITY</scope>
</reference>
<reference key="3">
    <citation type="submission" date="2009-10" db="EMBL/GenBank/DDBJ databases">
        <title>Splice variant hGIRK1d from human breast cancer cells.</title>
        <authorList>
            <person name="Wagner V."/>
            <person name="Gorischek A."/>
            <person name="Bauernhofer T."/>
            <person name="Schreibmayer W."/>
        </authorList>
    </citation>
    <scope>NUCLEOTIDE SEQUENCE [MRNA] (ISOFORM 2)</scope>
</reference>
<reference key="4">
    <citation type="journal article" date="2004" name="Nat. Genet.">
        <title>Complete sequencing and characterization of 21,243 full-length human cDNAs.</title>
        <authorList>
            <person name="Ota T."/>
            <person name="Suzuki Y."/>
            <person name="Nishikawa T."/>
            <person name="Otsuki T."/>
            <person name="Sugiyama T."/>
            <person name="Irie R."/>
            <person name="Wakamatsu A."/>
            <person name="Hayashi K."/>
            <person name="Sato H."/>
            <person name="Nagai K."/>
            <person name="Kimura K."/>
            <person name="Makita H."/>
            <person name="Sekine M."/>
            <person name="Obayashi M."/>
            <person name="Nishi T."/>
            <person name="Shibahara T."/>
            <person name="Tanaka T."/>
            <person name="Ishii S."/>
            <person name="Yamamoto J."/>
            <person name="Saito K."/>
            <person name="Kawai Y."/>
            <person name="Isono Y."/>
            <person name="Nakamura Y."/>
            <person name="Nagahari K."/>
            <person name="Murakami K."/>
            <person name="Yasuda T."/>
            <person name="Iwayanagi T."/>
            <person name="Wagatsuma M."/>
            <person name="Shiratori A."/>
            <person name="Sudo H."/>
            <person name="Hosoiri T."/>
            <person name="Kaku Y."/>
            <person name="Kodaira H."/>
            <person name="Kondo H."/>
            <person name="Sugawara M."/>
            <person name="Takahashi M."/>
            <person name="Kanda K."/>
            <person name="Yokoi T."/>
            <person name="Furuya T."/>
            <person name="Kikkawa E."/>
            <person name="Omura Y."/>
            <person name="Abe K."/>
            <person name="Kamihara K."/>
            <person name="Katsuta N."/>
            <person name="Sato K."/>
            <person name="Tanikawa M."/>
            <person name="Yamazaki M."/>
            <person name="Ninomiya K."/>
            <person name="Ishibashi T."/>
            <person name="Yamashita H."/>
            <person name="Murakawa K."/>
            <person name="Fujimori K."/>
            <person name="Tanai H."/>
            <person name="Kimata M."/>
            <person name="Watanabe M."/>
            <person name="Hiraoka S."/>
            <person name="Chiba Y."/>
            <person name="Ishida S."/>
            <person name="Ono Y."/>
            <person name="Takiguchi S."/>
            <person name="Watanabe S."/>
            <person name="Yosida M."/>
            <person name="Hotuta T."/>
            <person name="Kusano J."/>
            <person name="Kanehori K."/>
            <person name="Takahashi-Fujii A."/>
            <person name="Hara H."/>
            <person name="Tanase T.-O."/>
            <person name="Nomura Y."/>
            <person name="Togiya S."/>
            <person name="Komai F."/>
            <person name="Hara R."/>
            <person name="Takeuchi K."/>
            <person name="Arita M."/>
            <person name="Imose N."/>
            <person name="Musashino K."/>
            <person name="Yuuki H."/>
            <person name="Oshima A."/>
            <person name="Sasaki N."/>
            <person name="Aotsuka S."/>
            <person name="Yoshikawa Y."/>
            <person name="Matsunawa H."/>
            <person name="Ichihara T."/>
            <person name="Shiohata N."/>
            <person name="Sano S."/>
            <person name="Moriya S."/>
            <person name="Momiyama H."/>
            <person name="Satoh N."/>
            <person name="Takami S."/>
            <person name="Terashima Y."/>
            <person name="Suzuki O."/>
            <person name="Nakagawa S."/>
            <person name="Senoh A."/>
            <person name="Mizoguchi H."/>
            <person name="Goto Y."/>
            <person name="Shimizu F."/>
            <person name="Wakebe H."/>
            <person name="Hishigaki H."/>
            <person name="Watanabe T."/>
            <person name="Sugiyama A."/>
            <person name="Takemoto M."/>
            <person name="Kawakami B."/>
            <person name="Yamazaki M."/>
            <person name="Watanabe K."/>
            <person name="Kumagai A."/>
            <person name="Itakura S."/>
            <person name="Fukuzumi Y."/>
            <person name="Fujimori Y."/>
            <person name="Komiyama M."/>
            <person name="Tashiro H."/>
            <person name="Tanigami A."/>
            <person name="Fujiwara T."/>
            <person name="Ono T."/>
            <person name="Yamada K."/>
            <person name="Fujii Y."/>
            <person name="Ozaki K."/>
            <person name="Hirao M."/>
            <person name="Ohmori Y."/>
            <person name="Kawabata A."/>
            <person name="Hikiji T."/>
            <person name="Kobatake N."/>
            <person name="Inagaki H."/>
            <person name="Ikema Y."/>
            <person name="Okamoto S."/>
            <person name="Okitani R."/>
            <person name="Kawakami T."/>
            <person name="Noguchi S."/>
            <person name="Itoh T."/>
            <person name="Shigeta K."/>
            <person name="Senba T."/>
            <person name="Matsumura K."/>
            <person name="Nakajima Y."/>
            <person name="Mizuno T."/>
            <person name="Morinaga M."/>
            <person name="Sasaki M."/>
            <person name="Togashi T."/>
            <person name="Oyama M."/>
            <person name="Hata H."/>
            <person name="Watanabe M."/>
            <person name="Komatsu T."/>
            <person name="Mizushima-Sugano J."/>
            <person name="Satoh T."/>
            <person name="Shirai Y."/>
            <person name="Takahashi Y."/>
            <person name="Nakagawa K."/>
            <person name="Okumura K."/>
            <person name="Nagase T."/>
            <person name="Nomura N."/>
            <person name="Kikuchi H."/>
            <person name="Masuho Y."/>
            <person name="Yamashita R."/>
            <person name="Nakai K."/>
            <person name="Yada T."/>
            <person name="Nakamura Y."/>
            <person name="Ohara O."/>
            <person name="Isogai T."/>
            <person name="Sugano S."/>
        </authorList>
    </citation>
    <scope>NUCLEOTIDE SEQUENCE [LARGE SCALE MRNA] (ISOFORM 2)</scope>
    <source>
        <tissue>Cerebellum</tissue>
    </source>
</reference>
<reference key="5">
    <citation type="journal article" date="2005" name="Nature">
        <title>Generation and annotation of the DNA sequences of human chromosomes 2 and 4.</title>
        <authorList>
            <person name="Hillier L.W."/>
            <person name="Graves T.A."/>
            <person name="Fulton R.S."/>
            <person name="Fulton L.A."/>
            <person name="Pepin K.H."/>
            <person name="Minx P."/>
            <person name="Wagner-McPherson C."/>
            <person name="Layman D."/>
            <person name="Wylie K."/>
            <person name="Sekhon M."/>
            <person name="Becker M.C."/>
            <person name="Fewell G.A."/>
            <person name="Delehaunty K.D."/>
            <person name="Miner T.L."/>
            <person name="Nash W.E."/>
            <person name="Kremitzki C."/>
            <person name="Oddy L."/>
            <person name="Du H."/>
            <person name="Sun H."/>
            <person name="Bradshaw-Cordum H."/>
            <person name="Ali J."/>
            <person name="Carter J."/>
            <person name="Cordes M."/>
            <person name="Harris A."/>
            <person name="Isak A."/>
            <person name="van Brunt A."/>
            <person name="Nguyen C."/>
            <person name="Du F."/>
            <person name="Courtney L."/>
            <person name="Kalicki J."/>
            <person name="Ozersky P."/>
            <person name="Abbott S."/>
            <person name="Armstrong J."/>
            <person name="Belter E.A."/>
            <person name="Caruso L."/>
            <person name="Cedroni M."/>
            <person name="Cotton M."/>
            <person name="Davidson T."/>
            <person name="Desai A."/>
            <person name="Elliott G."/>
            <person name="Erb T."/>
            <person name="Fronick C."/>
            <person name="Gaige T."/>
            <person name="Haakenson W."/>
            <person name="Haglund K."/>
            <person name="Holmes A."/>
            <person name="Harkins R."/>
            <person name="Kim K."/>
            <person name="Kruchowski S.S."/>
            <person name="Strong C.M."/>
            <person name="Grewal N."/>
            <person name="Goyea E."/>
            <person name="Hou S."/>
            <person name="Levy A."/>
            <person name="Martinka S."/>
            <person name="Mead K."/>
            <person name="McLellan M.D."/>
            <person name="Meyer R."/>
            <person name="Randall-Maher J."/>
            <person name="Tomlinson C."/>
            <person name="Dauphin-Kohlberg S."/>
            <person name="Kozlowicz-Reilly A."/>
            <person name="Shah N."/>
            <person name="Swearengen-Shahid S."/>
            <person name="Snider J."/>
            <person name="Strong J.T."/>
            <person name="Thompson J."/>
            <person name="Yoakum M."/>
            <person name="Leonard S."/>
            <person name="Pearman C."/>
            <person name="Trani L."/>
            <person name="Radionenko M."/>
            <person name="Waligorski J.E."/>
            <person name="Wang C."/>
            <person name="Rock S.M."/>
            <person name="Tin-Wollam A.-M."/>
            <person name="Maupin R."/>
            <person name="Latreille P."/>
            <person name="Wendl M.C."/>
            <person name="Yang S.-P."/>
            <person name="Pohl C."/>
            <person name="Wallis J.W."/>
            <person name="Spieth J."/>
            <person name="Bieri T.A."/>
            <person name="Berkowicz N."/>
            <person name="Nelson J.O."/>
            <person name="Osborne J."/>
            <person name="Ding L."/>
            <person name="Meyer R."/>
            <person name="Sabo A."/>
            <person name="Shotland Y."/>
            <person name="Sinha P."/>
            <person name="Wohldmann P.E."/>
            <person name="Cook L.L."/>
            <person name="Hickenbotham M.T."/>
            <person name="Eldred J."/>
            <person name="Williams D."/>
            <person name="Jones T.A."/>
            <person name="She X."/>
            <person name="Ciccarelli F.D."/>
            <person name="Izaurralde E."/>
            <person name="Taylor J."/>
            <person name="Schmutz J."/>
            <person name="Myers R.M."/>
            <person name="Cox D.R."/>
            <person name="Huang X."/>
            <person name="McPherson J.D."/>
            <person name="Mardis E.R."/>
            <person name="Clifton S.W."/>
            <person name="Warren W.C."/>
            <person name="Chinwalla A.T."/>
            <person name="Eddy S.R."/>
            <person name="Marra M.A."/>
            <person name="Ovcharenko I."/>
            <person name="Furey T.S."/>
            <person name="Miller W."/>
            <person name="Eichler E.E."/>
            <person name="Bork P."/>
            <person name="Suyama M."/>
            <person name="Torrents D."/>
            <person name="Waterston R.H."/>
            <person name="Wilson R.K."/>
        </authorList>
    </citation>
    <scope>NUCLEOTIDE SEQUENCE [LARGE SCALE GENOMIC DNA]</scope>
</reference>
<reference key="6">
    <citation type="journal article" date="2004" name="Genome Res.">
        <title>The status, quality, and expansion of the NIH full-length cDNA project: the Mammalian Gene Collection (MGC).</title>
        <authorList>
            <consortium name="The MGC Project Team"/>
        </authorList>
    </citation>
    <scope>NUCLEOTIDE SEQUENCE [LARGE SCALE MRNA] (ISOFORM 1)</scope>
    <source>
        <tissue>Brain</tissue>
    </source>
</reference>
<reference key="7">
    <citation type="journal article" date="1999" name="Cell. Signal.">
        <title>Co-expression of human Kir3 subunits can yield channels with different functional properties.</title>
        <authorList>
            <person name="Schoots O."/>
            <person name="Wilson J.M."/>
            <person name="Ethier N."/>
            <person name="Bigras E."/>
            <person name="Hebert T.E."/>
            <person name="Van Tol H.H.M."/>
        </authorList>
    </citation>
    <scope>SUBUNIT</scope>
</reference>
<reference key="8">
    <citation type="journal article" date="2000" name="J. Biol. Chem.">
        <title>Glycosylation of GIRK1 at Asn119 and ROMK1 at Asn117 has different consequences in potassium channel function.</title>
        <authorList>
            <person name="Pabon A."/>
            <person name="Chan K.W."/>
            <person name="Sui J.L."/>
            <person name="Wu X."/>
            <person name="Logothetis D.E."/>
            <person name="Thornhill W.B."/>
        </authorList>
    </citation>
    <scope>GLYCOSYLATION AT ASN-119</scope>
</reference>
<sequence length="501" mass="56603">MSALRRKFGDDYQVVTTSSSGSGLQPQGPGQDPQQQLVPKKKRQRFVDKNGRCNVQHGNLGSETSRYLSDLFTTLVDLKWRWNLFIFILTYTVAWLFMASMWWVIAYTRGDLNKAHVGNYTPCVANVYNFPSAFLFFIETEATIGYGYRYITDKCPEGIILFLFQSILGSIVDAFLIGCMFIKMSQPKKRAETLMFSEHAVISMRDGKLTLMFRVGNLRNSHMVSAQIRCKLLKSRQTPEGEFLPLDQLELDVGFSTGADQLFLVSPLTICHVIDAKSPFYDLSQRSMQTEQFEIVVILEGIVETTGMTCQARTSYTEDEVLWGHRFFPVISLEEGFFKVDYSQFHATFEVPTPPYSVKEQEEMLLMSSPLIAPAITNSKERHNSVECLDGLDDITTKLPSKLQKITGREDFPKKLLRMSSTTSEKAYSLGDLPMKLQRISSVPGNSEEKLVSKTTKMLSDPMSQSVADLPPKLQKMAGGAARMEGNLPAKLRKMNSDRFT</sequence>
<keyword id="KW-0025">Alternative splicing</keyword>
<keyword id="KW-0325">Glycoprotein</keyword>
<keyword id="KW-0407">Ion channel</keyword>
<keyword id="KW-0406">Ion transport</keyword>
<keyword id="KW-0472">Membrane</keyword>
<keyword id="KW-0597">Phosphoprotein</keyword>
<keyword id="KW-0630">Potassium</keyword>
<keyword id="KW-0633">Potassium transport</keyword>
<keyword id="KW-1267">Proteomics identification</keyword>
<keyword id="KW-1185">Reference proteome</keyword>
<keyword id="KW-0812">Transmembrane</keyword>
<keyword id="KW-1133">Transmembrane helix</keyword>
<keyword id="KW-0813">Transport</keyword>
<keyword id="KW-0851">Voltage-gated channel</keyword>
<protein>
    <recommendedName>
        <fullName>G protein-activated inward rectifier potassium channel 1</fullName>
        <shortName>GIRK-1</shortName>
    </recommendedName>
    <alternativeName>
        <fullName>Inward rectifier K(+) channel Kir3.1</fullName>
    </alternativeName>
    <alternativeName>
        <fullName>Potassium channel, inwardly rectifying subfamily J member 3</fullName>
    </alternativeName>
</protein>
<name>KCNJ3_HUMAN</name>
<organism>
    <name type="scientific">Homo sapiens</name>
    <name type="common">Human</name>
    <dbReference type="NCBI Taxonomy" id="9606"/>
    <lineage>
        <taxon>Eukaryota</taxon>
        <taxon>Metazoa</taxon>
        <taxon>Chordata</taxon>
        <taxon>Craniata</taxon>
        <taxon>Vertebrata</taxon>
        <taxon>Euteleostomi</taxon>
        <taxon>Mammalia</taxon>
        <taxon>Eutheria</taxon>
        <taxon>Euarchontoglires</taxon>
        <taxon>Primates</taxon>
        <taxon>Haplorrhini</taxon>
        <taxon>Catarrhini</taxon>
        <taxon>Hominidae</taxon>
        <taxon>Homo</taxon>
    </lineage>
</organism>
<evidence type="ECO:0000250" key="1"/>
<evidence type="ECO:0000250" key="2">
    <source>
        <dbReference type="UniProtKB" id="P63250"/>
    </source>
</evidence>
<evidence type="ECO:0000250" key="3">
    <source>
        <dbReference type="UniProtKB" id="P63251"/>
    </source>
</evidence>
<evidence type="ECO:0000255" key="4"/>
<evidence type="ECO:0000256" key="5">
    <source>
        <dbReference type="SAM" id="MobiDB-lite"/>
    </source>
</evidence>
<evidence type="ECO:0000269" key="6">
    <source>
    </source>
</evidence>
<evidence type="ECO:0000269" key="7">
    <source>
    </source>
</evidence>
<evidence type="ECO:0000269" key="8">
    <source>
    </source>
</evidence>
<evidence type="ECO:0000269" key="9">
    <source>
    </source>
</evidence>
<evidence type="ECO:0000303" key="10">
    <source>
    </source>
</evidence>
<evidence type="ECO:0000303" key="11">
    <source ref="3"/>
</evidence>
<evidence type="ECO:0000305" key="12"/>
<gene>
    <name type="primary">KCNJ3</name>
    <name type="synonym">GIRK1</name>
</gene>
<dbReference type="EMBL" id="U39196">
    <property type="protein sequence ID" value="AAB53094.1"/>
    <property type="molecule type" value="mRNA"/>
</dbReference>
<dbReference type="EMBL" id="U50964">
    <property type="protein sequence ID" value="AAB42176.1"/>
    <property type="molecule type" value="mRNA"/>
</dbReference>
<dbReference type="EMBL" id="GU074515">
    <property type="protein sequence ID" value="ADB11081.1"/>
    <property type="molecule type" value="mRNA"/>
</dbReference>
<dbReference type="EMBL" id="AK293824">
    <property type="protein sequence ID" value="BAG57228.1"/>
    <property type="molecule type" value="mRNA"/>
</dbReference>
<dbReference type="EMBL" id="AC061961">
    <property type="status" value="NOT_ANNOTATED_CDS"/>
    <property type="molecule type" value="Genomic_DNA"/>
</dbReference>
<dbReference type="EMBL" id="AC093633">
    <property type="status" value="NOT_ANNOTATED_CDS"/>
    <property type="molecule type" value="Genomic_DNA"/>
</dbReference>
<dbReference type="EMBL" id="AC107060">
    <property type="status" value="NOT_ANNOTATED_CDS"/>
    <property type="molecule type" value="Genomic_DNA"/>
</dbReference>
<dbReference type="EMBL" id="BC022495">
    <property type="protein sequence ID" value="AAH22495.1"/>
    <property type="molecule type" value="mRNA"/>
</dbReference>
<dbReference type="CCDS" id="CCDS2200.1">
    <molecule id="P48549-1"/>
</dbReference>
<dbReference type="CCDS" id="CCDS58733.1">
    <molecule id="P48549-2"/>
</dbReference>
<dbReference type="PIR" id="G02468">
    <property type="entry name" value="G02468"/>
</dbReference>
<dbReference type="RefSeq" id="NP_001247437.1">
    <molecule id="P48549-2"/>
    <property type="nucleotide sequence ID" value="NM_001260508.2"/>
</dbReference>
<dbReference type="RefSeq" id="NP_001247438.1">
    <property type="nucleotide sequence ID" value="NM_001260509.1"/>
</dbReference>
<dbReference type="RefSeq" id="NP_001247439.1">
    <property type="nucleotide sequence ID" value="NM_001260510.1"/>
</dbReference>
<dbReference type="RefSeq" id="NP_002230.1">
    <molecule id="P48549-1"/>
    <property type="nucleotide sequence ID" value="NM_002239.4"/>
</dbReference>
<dbReference type="EMDB" id="EMD-22201"/>
<dbReference type="EMDB" id="EMD-22202"/>
<dbReference type="SMR" id="P48549"/>
<dbReference type="BioGRID" id="109962">
    <property type="interactions" value="21"/>
</dbReference>
<dbReference type="ComplexPortal" id="CPX-3278">
    <property type="entry name" value="I(KACh) inward rectifier potassium channel complex"/>
</dbReference>
<dbReference type="FunCoup" id="P48549">
    <property type="interactions" value="706"/>
</dbReference>
<dbReference type="IntAct" id="P48549">
    <property type="interactions" value="2"/>
</dbReference>
<dbReference type="STRING" id="9606.ENSP00000295101"/>
<dbReference type="BindingDB" id="P48549"/>
<dbReference type="ChEMBL" id="CHEMBL1914277"/>
<dbReference type="DrugBank" id="DB00289">
    <property type="generic name" value="Atomoxetine"/>
</dbReference>
<dbReference type="DrugBank" id="DB02451">
    <property type="generic name" value="B-nonylglucoside"/>
</dbReference>
<dbReference type="DrugBank" id="DB04855">
    <property type="generic name" value="Dronedarone"/>
</dbReference>
<dbReference type="DrugBank" id="DB00898">
    <property type="generic name" value="Ethanol"/>
</dbReference>
<dbReference type="DrugBank" id="DB01159">
    <property type="generic name" value="Halothane"/>
</dbReference>
<dbReference type="DrugBank" id="DB08954">
    <property type="generic name" value="Ifenprodil"/>
</dbReference>
<dbReference type="DrugCentral" id="P48549"/>
<dbReference type="GuidetoPHARMACOLOGY" id="434"/>
<dbReference type="TCDB" id="1.A.2.1.12">
    <property type="family name" value="the inward rectifier k(+) channel (irk-c) family"/>
</dbReference>
<dbReference type="GlyCosmos" id="P48549">
    <property type="glycosylation" value="1 site, No reported glycans"/>
</dbReference>
<dbReference type="GlyGen" id="P48549">
    <property type="glycosylation" value="1 site"/>
</dbReference>
<dbReference type="iPTMnet" id="P48549"/>
<dbReference type="PhosphoSitePlus" id="P48549"/>
<dbReference type="BioMuta" id="KCNJ3"/>
<dbReference type="DMDM" id="1352482"/>
<dbReference type="MassIVE" id="P48549"/>
<dbReference type="PaxDb" id="9606-ENSP00000295101"/>
<dbReference type="PeptideAtlas" id="P48549"/>
<dbReference type="ProteomicsDB" id="3990"/>
<dbReference type="ProteomicsDB" id="55904">
    <molecule id="P48549-1"/>
</dbReference>
<dbReference type="Antibodypedia" id="18931">
    <property type="antibodies" value="490 antibodies from 33 providers"/>
</dbReference>
<dbReference type="DNASU" id="3760"/>
<dbReference type="Ensembl" id="ENST00000295101.3">
    <molecule id="P48549-1"/>
    <property type="protein sequence ID" value="ENSP00000295101.2"/>
    <property type="gene ID" value="ENSG00000162989.5"/>
</dbReference>
<dbReference type="Ensembl" id="ENST00000544049.2">
    <molecule id="P48549-2"/>
    <property type="protein sequence ID" value="ENSP00000438410.1"/>
    <property type="gene ID" value="ENSG00000162989.5"/>
</dbReference>
<dbReference type="GeneID" id="3760"/>
<dbReference type="KEGG" id="hsa:3760"/>
<dbReference type="MANE-Select" id="ENST00000295101.3">
    <property type="protein sequence ID" value="ENSP00000295101.2"/>
    <property type="RefSeq nucleotide sequence ID" value="NM_002239.4"/>
    <property type="RefSeq protein sequence ID" value="NP_002230.1"/>
</dbReference>
<dbReference type="UCSC" id="uc002tyv.3">
    <molecule id="P48549-1"/>
    <property type="organism name" value="human"/>
</dbReference>
<dbReference type="AGR" id="HGNC:6264"/>
<dbReference type="CTD" id="3760"/>
<dbReference type="DisGeNET" id="3760"/>
<dbReference type="GeneCards" id="KCNJ3"/>
<dbReference type="HGNC" id="HGNC:6264">
    <property type="gene designation" value="KCNJ3"/>
</dbReference>
<dbReference type="HPA" id="ENSG00000162989">
    <property type="expression patterns" value="Tissue enhanced (brain)"/>
</dbReference>
<dbReference type="MalaCards" id="KCNJ3"/>
<dbReference type="MIM" id="601534">
    <property type="type" value="gene"/>
</dbReference>
<dbReference type="neXtProt" id="NX_P48549"/>
<dbReference type="OpenTargets" id="ENSG00000162989"/>
<dbReference type="Orphanet" id="334">
    <property type="disease" value="Familial atrial fibrillation"/>
</dbReference>
<dbReference type="PharmGKB" id="PA215"/>
<dbReference type="VEuPathDB" id="HostDB:ENSG00000162989"/>
<dbReference type="eggNOG" id="KOG3827">
    <property type="taxonomic scope" value="Eukaryota"/>
</dbReference>
<dbReference type="GeneTree" id="ENSGT01080000257365"/>
<dbReference type="HOGENOM" id="CLU_022738_13_0_1"/>
<dbReference type="InParanoid" id="P48549"/>
<dbReference type="OMA" id="ITNSKDR"/>
<dbReference type="OrthoDB" id="273257at2759"/>
<dbReference type="PAN-GO" id="P48549">
    <property type="GO annotations" value="3 GO annotations based on evolutionary models"/>
</dbReference>
<dbReference type="PhylomeDB" id="P48549"/>
<dbReference type="TreeFam" id="TF313676"/>
<dbReference type="PathwayCommons" id="P48549"/>
<dbReference type="Reactome" id="R-HSA-1296041">
    <property type="pathway name" value="Activation of G protein gated Potassium channels"/>
</dbReference>
<dbReference type="Reactome" id="R-HSA-997272">
    <property type="pathway name" value="Inhibition of voltage gated Ca2+ channels via Gbeta/gamma subunits"/>
</dbReference>
<dbReference type="SignaLink" id="P48549"/>
<dbReference type="SIGNOR" id="P48549"/>
<dbReference type="BioGRID-ORCS" id="3760">
    <property type="hits" value="16 hits in 1146 CRISPR screens"/>
</dbReference>
<dbReference type="ChiTaRS" id="KCNJ3">
    <property type="organism name" value="human"/>
</dbReference>
<dbReference type="GeneWiki" id="KCNJ3"/>
<dbReference type="GenomeRNAi" id="3760"/>
<dbReference type="Pharos" id="P48549">
    <property type="development level" value="Tchem"/>
</dbReference>
<dbReference type="PRO" id="PR:P48549"/>
<dbReference type="Proteomes" id="UP000005640">
    <property type="component" value="Chromosome 2"/>
</dbReference>
<dbReference type="RNAct" id="P48549">
    <property type="molecule type" value="protein"/>
</dbReference>
<dbReference type="Bgee" id="ENSG00000162989">
    <property type="expression patterns" value="Expressed in endothelial cell and 141 other cell types or tissues"/>
</dbReference>
<dbReference type="ExpressionAtlas" id="P48549">
    <property type="expression patterns" value="baseline and differential"/>
</dbReference>
<dbReference type="GO" id="GO:0009897">
    <property type="term" value="C:external side of plasma membrane"/>
    <property type="evidence" value="ECO:0007669"/>
    <property type="project" value="Ensembl"/>
</dbReference>
<dbReference type="GO" id="GO:1990566">
    <property type="term" value="C:I(KACh) inward rectifier potassium channel complex"/>
    <property type="evidence" value="ECO:0000266"/>
    <property type="project" value="ComplexPortal"/>
</dbReference>
<dbReference type="GO" id="GO:0098688">
    <property type="term" value="C:parallel fiber to Purkinje cell synapse"/>
    <property type="evidence" value="ECO:0007669"/>
    <property type="project" value="Ensembl"/>
</dbReference>
<dbReference type="GO" id="GO:0005886">
    <property type="term" value="C:plasma membrane"/>
    <property type="evidence" value="ECO:0000318"/>
    <property type="project" value="GO_Central"/>
</dbReference>
<dbReference type="GO" id="GO:0042734">
    <property type="term" value="C:presynaptic membrane"/>
    <property type="evidence" value="ECO:0007669"/>
    <property type="project" value="Ensembl"/>
</dbReference>
<dbReference type="GO" id="GO:0030315">
    <property type="term" value="C:T-tubule"/>
    <property type="evidence" value="ECO:0007669"/>
    <property type="project" value="Ensembl"/>
</dbReference>
<dbReference type="GO" id="GO:0008076">
    <property type="term" value="C:voltage-gated potassium channel complex"/>
    <property type="evidence" value="ECO:0000314"/>
    <property type="project" value="BHF-UCL"/>
</dbReference>
<dbReference type="GO" id="GO:0015467">
    <property type="term" value="F:G-protein activated inward rectifier potassium channel activity"/>
    <property type="evidence" value="ECO:0000314"/>
    <property type="project" value="UniProtKB"/>
</dbReference>
<dbReference type="GO" id="GO:0005546">
    <property type="term" value="F:phosphatidylinositol-4,5-bisphosphate binding"/>
    <property type="evidence" value="ECO:0000250"/>
    <property type="project" value="UniProtKB"/>
</dbReference>
<dbReference type="GO" id="GO:0099508">
    <property type="term" value="F:voltage-gated monoatomic ion channel activity involved in regulation of presynaptic membrane potential"/>
    <property type="evidence" value="ECO:0007669"/>
    <property type="project" value="Ensembl"/>
</dbReference>
<dbReference type="GO" id="GO:0086089">
    <property type="term" value="F:voltage-gated potassium channel activity involved in atrial cardiac muscle cell action potential repolarization"/>
    <property type="evidence" value="ECO:0000305"/>
    <property type="project" value="BHF-UCL"/>
</dbReference>
<dbReference type="GO" id="GO:1902282">
    <property type="term" value="F:voltage-gated potassium channel activity involved in ventricular cardiac muscle cell action potential repolarization"/>
    <property type="evidence" value="ECO:0000305"/>
    <property type="project" value="BHF-UCL"/>
</dbReference>
<dbReference type="GO" id="GO:0098914">
    <property type="term" value="P:membrane repolarization during atrial cardiac muscle cell action potential"/>
    <property type="evidence" value="ECO:0000305"/>
    <property type="project" value="BHF-UCL"/>
</dbReference>
<dbReference type="GO" id="GO:1990573">
    <property type="term" value="P:potassium ion import across plasma membrane"/>
    <property type="evidence" value="ECO:0000314"/>
    <property type="project" value="BHF-UCL"/>
</dbReference>
<dbReference type="GO" id="GO:0071805">
    <property type="term" value="P:potassium ion transmembrane transport"/>
    <property type="evidence" value="ECO:0000303"/>
    <property type="project" value="ComplexPortal"/>
</dbReference>
<dbReference type="GO" id="GO:0006813">
    <property type="term" value="P:potassium ion transport"/>
    <property type="evidence" value="ECO:0000304"/>
    <property type="project" value="ProtInc"/>
</dbReference>
<dbReference type="GO" id="GO:0086091">
    <property type="term" value="P:regulation of heart rate by cardiac conduction"/>
    <property type="evidence" value="ECO:0000305"/>
    <property type="project" value="BHF-UCL"/>
</dbReference>
<dbReference type="GO" id="GO:0034765">
    <property type="term" value="P:regulation of monoatomic ion transmembrane transport"/>
    <property type="evidence" value="ECO:0000318"/>
    <property type="project" value="GO_Central"/>
</dbReference>
<dbReference type="GO" id="GO:0051602">
    <property type="term" value="P:response to electrical stimulus"/>
    <property type="evidence" value="ECO:0007669"/>
    <property type="project" value="Ensembl"/>
</dbReference>
<dbReference type="GO" id="GO:0099625">
    <property type="term" value="P:ventricular cardiac muscle cell membrane repolarization"/>
    <property type="evidence" value="ECO:0000305"/>
    <property type="project" value="BHF-UCL"/>
</dbReference>
<dbReference type="FunFam" id="1.10.287.70:FF:000019">
    <property type="entry name" value="G protein-activated inward rectifier potassium channel 1"/>
    <property type="match status" value="1"/>
</dbReference>
<dbReference type="FunFam" id="2.60.40.1400:FF:000006">
    <property type="entry name" value="G protein-activated inward rectifier potassium channel 1"/>
    <property type="match status" value="1"/>
</dbReference>
<dbReference type="Gene3D" id="1.10.287.70">
    <property type="match status" value="1"/>
</dbReference>
<dbReference type="Gene3D" id="2.60.40.1400">
    <property type="entry name" value="G protein-activated inward rectifier potassium channel 1"/>
    <property type="match status" value="1"/>
</dbReference>
<dbReference type="InterPro" id="IPR014756">
    <property type="entry name" value="Ig_E-set"/>
</dbReference>
<dbReference type="InterPro" id="IPR041647">
    <property type="entry name" value="IRK_C"/>
</dbReference>
<dbReference type="InterPro" id="IPR016449">
    <property type="entry name" value="K_chnl_inward-rec_Kir"/>
</dbReference>
<dbReference type="InterPro" id="IPR003274">
    <property type="entry name" value="K_chnl_inward-rec_Kir3.1"/>
</dbReference>
<dbReference type="InterPro" id="IPR013518">
    <property type="entry name" value="K_chnl_inward-rec_Kir_cyto"/>
</dbReference>
<dbReference type="InterPro" id="IPR040445">
    <property type="entry name" value="Kir_TM"/>
</dbReference>
<dbReference type="PANTHER" id="PTHR11767:SF16">
    <property type="entry name" value="G PROTEIN-ACTIVATED INWARD RECTIFIER POTASSIUM CHANNEL 1"/>
    <property type="match status" value="1"/>
</dbReference>
<dbReference type="PANTHER" id="PTHR11767">
    <property type="entry name" value="INWARD RECTIFIER POTASSIUM CHANNEL"/>
    <property type="match status" value="1"/>
</dbReference>
<dbReference type="Pfam" id="PF01007">
    <property type="entry name" value="IRK"/>
    <property type="match status" value="1"/>
</dbReference>
<dbReference type="Pfam" id="PF17655">
    <property type="entry name" value="IRK_C"/>
    <property type="match status" value="1"/>
</dbReference>
<dbReference type="PRINTS" id="PR01327">
    <property type="entry name" value="KIR31CHANNEL"/>
</dbReference>
<dbReference type="PRINTS" id="PR01320">
    <property type="entry name" value="KIRCHANNEL"/>
</dbReference>
<dbReference type="SUPFAM" id="SSF81296">
    <property type="entry name" value="E set domains"/>
    <property type="match status" value="1"/>
</dbReference>
<dbReference type="SUPFAM" id="SSF81324">
    <property type="entry name" value="Voltage-gated potassium channels"/>
    <property type="match status" value="1"/>
</dbReference>
<accession>P48549</accession>
<accession>B4DEW7</accession>
<accession>Q8TBI0</accession>
<comment type="function">
    <text evidence="3 8 9">Inward rectifier potassium channels are characterized by a greater tendency to allow potassium to flow into the cell rather than out of it. Their voltage dependence is regulated by the concentration of extracellular potassium; as external potassium is raised, the voltage range of the channel opening shifts to more positive voltages. The inward rectification is mainly due to the blockage of outward current by internal magnesium. This potassium channel is controlled by G proteins (PubMed:8804710, PubMed:8868049). This receptor plays a crucial role in regulating the heartbeat (By similarity).</text>
</comment>
<comment type="catalytic activity">
    <reaction evidence="8 9">
        <text>K(+)(in) = K(+)(out)</text>
        <dbReference type="Rhea" id="RHEA:29463"/>
        <dbReference type="ChEBI" id="CHEBI:29103"/>
    </reaction>
</comment>
<comment type="activity regulation">
    <text evidence="3">Heteromultimer composed of KCNJ3/GIRK1 and KCNJ5/GIRK4 is activated by phosphatidylinositol 4,5 biphosphate (PtdIns(4,5)P2).</text>
</comment>
<comment type="subunit">
    <text evidence="2 6 9">Associates with KCNJ5/GIRK4 or KCNJ6/GIRK2 to form a G-protein activated heteromultimer pore-forming unit. The resulting inward current is much larger (PubMed:10659995, PubMed:8868049). Associates with KCNJ9/GIRK3 to form a G-protein activated heteromultimer pore-forming unit (By similarity).</text>
</comment>
<comment type="subcellular location">
    <subcellularLocation>
        <location evidence="4">Membrane</location>
        <topology evidence="4">Multi-pass membrane protein</topology>
    </subcellularLocation>
</comment>
<comment type="alternative products">
    <event type="alternative splicing"/>
    <isoform>
        <id>P48549-1</id>
        <name>1</name>
        <sequence type="displayed"/>
    </isoform>
    <isoform>
        <id>P48549-2</id>
        <name>2</name>
        <sequence type="described" ref="VSP_045432 VSP_045433"/>
    </isoform>
</comment>
<comment type="similarity">
    <text evidence="12">Belongs to the inward rectifier-type potassium channel (TC 1.A.2.1) family. KCNJ3 subfamily.</text>
</comment>